<dbReference type="EMBL" id="X74473">
    <property type="protein sequence ID" value="CAA52541.1"/>
    <property type="molecule type" value="Genomic_DNA"/>
</dbReference>
<dbReference type="EMBL" id="X74473">
    <property type="protein sequence ID" value="CAA52542.1"/>
    <property type="status" value="ALT_INIT"/>
    <property type="molecule type" value="Genomic_DNA"/>
</dbReference>
<dbReference type="PIR" id="S36502">
    <property type="entry name" value="S36502"/>
</dbReference>
<dbReference type="SMR" id="P36736"/>
<dbReference type="Proteomes" id="UP000009114">
    <property type="component" value="Genome"/>
</dbReference>
<dbReference type="GO" id="GO:0042025">
    <property type="term" value="C:host cell nucleus"/>
    <property type="evidence" value="ECO:0007669"/>
    <property type="project" value="UniProtKB-SubCell"/>
</dbReference>
<dbReference type="GO" id="GO:0039620">
    <property type="term" value="C:T=7 icosahedral viral capsid"/>
    <property type="evidence" value="ECO:0007669"/>
    <property type="project" value="UniProtKB-UniRule"/>
</dbReference>
<dbReference type="GO" id="GO:0005198">
    <property type="term" value="F:structural molecule activity"/>
    <property type="evidence" value="ECO:0007669"/>
    <property type="project" value="UniProtKB-UniRule"/>
</dbReference>
<dbReference type="GO" id="GO:0075509">
    <property type="term" value="P:endocytosis involved in viral entry into host cell"/>
    <property type="evidence" value="ECO:0007669"/>
    <property type="project" value="UniProtKB-KW"/>
</dbReference>
<dbReference type="GO" id="GO:0019062">
    <property type="term" value="P:virion attachment to host cell"/>
    <property type="evidence" value="ECO:0007669"/>
    <property type="project" value="UniProtKB-UniRule"/>
</dbReference>
<dbReference type="Gene3D" id="2.60.175.20">
    <property type="entry name" value="Major capsid L1 (late) superfamily, Papillomavirus"/>
    <property type="match status" value="2"/>
</dbReference>
<dbReference type="HAMAP" id="MF_04002">
    <property type="entry name" value="PPV_L1"/>
    <property type="match status" value="1"/>
</dbReference>
<dbReference type="InterPro" id="IPR002210">
    <property type="entry name" value="Capsid_L1_Papillomavir"/>
</dbReference>
<dbReference type="InterPro" id="IPR036973">
    <property type="entry name" value="Capsid_L1_sf_Papillomavir"/>
</dbReference>
<dbReference type="InterPro" id="IPR011222">
    <property type="entry name" value="dsDNA_vir_gr_I_capsid"/>
</dbReference>
<dbReference type="Pfam" id="PF00500">
    <property type="entry name" value="Late_protein_L1"/>
    <property type="match status" value="1"/>
</dbReference>
<dbReference type="PRINTS" id="PR00865">
    <property type="entry name" value="HPVCAPSIDL1"/>
</dbReference>
<dbReference type="SUPFAM" id="SSF88648">
    <property type="entry name" value="Group I dsDNA viruses"/>
    <property type="match status" value="1"/>
</dbReference>
<protein>
    <recommendedName>
        <fullName evidence="1">Major capsid protein L1</fullName>
    </recommendedName>
</protein>
<sequence>MMFMLILMSCSHWTITTQPLAAPWLIPRYLPPLHLHCEGPLQPLSRVVLMCLCILGLILNHPLFLVWGPSFLWLHRCHPLFTYLGGIIIYCQVISCGLNDVNVSTISLQMALWRPNESKVYLPPTPVSKVISTDVYVTRTNVYYHGGSSRLLTVGHPYYSIKKGSNNRLAVPKVSGYQYRVFHVKLPDPNKFGLPDADLYDPDTQRLLWACVGVEVGRGQPLGVGVSGHPYYNRQDDTENAHTLDSAEDGRENISMDYKQTQLFILGCKPSIGEHWSKGTTCNGSSAAGDCPPLQFTNSTIEDGDMVETGFGALDFATLQSNRSDVPLDICTNVCKYPDYLKMAAEPYGDSMFFSLRREQMFTRHFFNRAGKMGDTIPDELYIKSTTISDPGSHVYTSTPSGSMVSSEQQLFNKPYWLRRAQGHNNGMCWGNRIFLTVVDTTRSTNVSLCAAEVSDNTNYKATNFKEYLRHMEEYDLQFIFQLCKITLTPEIMAYIHNMDPQLLEDWNFGVPPPPSASLQDTYRYLQSQAITCQKPTPPKTPTDPYANMTFWDVDLRESFSMDLDQFPLGRKFLLQRGTTPTVSRKRTAVGRGH</sequence>
<comment type="function">
    <text evidence="1">Forms an icosahedral capsid with a T=7 symmetry and a 50 nm diameter. The capsid is composed of 72 pentamers linked to each other by disulfide bonds and associated with L2 proteins. Binds to heparan sulfate proteoglycans on cell surface of basal layer keratinocytes to provide initial virion attachment. This binding mediates a conformational change in the virus capsid that facilitates efficient infection. The virion enters the host cell via endocytosis. During virus trafficking, L1 protein dissociates from the viral DNA and the genomic DNA is released to the host nucleus. The virion assembly takes place within the cell nucleus. Encapsulates the genomic DNA together with protein L2.</text>
</comment>
<comment type="subunit">
    <text evidence="1">Self-assembles into homopentamers. The capsid has an icosahedral symmetry and consists of 72 capsomers, with each capsomer being a pentamer of L1. Interacts with the minor capsid protein L2; this interaction is necessary for viral genome encapsidation. Interacts with protein L1; this interaction enhances E2-dependent replication and transcription activation.</text>
</comment>
<comment type="subcellular location">
    <subcellularLocation>
        <location evidence="1 2">Virion</location>
    </subcellularLocation>
    <subcellularLocation>
        <location evidence="1">Host nucleus</location>
    </subcellularLocation>
</comment>
<comment type="similarity">
    <text evidence="1 2">Belongs to the papillomaviridae L1 protein family.</text>
</comment>
<comment type="caution">
    <text evidence="2">It is uncertain whether Met-1 or Met-110 is the initiator.</text>
</comment>
<comment type="sequence caution" evidence="2">
    <conflict type="erroneous initiation">
        <sequence resource="EMBL-CDS" id="CAA52542"/>
    </conflict>
</comment>
<evidence type="ECO:0000255" key="1">
    <source>
        <dbReference type="HAMAP-Rule" id="MF_04002"/>
    </source>
</evidence>
<evidence type="ECO:0000305" key="2"/>
<proteinExistence type="inferred from homology"/>
<keyword id="KW-0167">Capsid protein</keyword>
<keyword id="KW-1015">Disulfide bond</keyword>
<keyword id="KW-1048">Host nucleus</keyword>
<keyword id="KW-0945">Host-virus interaction</keyword>
<keyword id="KW-0426">Late protein</keyword>
<keyword id="KW-1185">Reference proteome</keyword>
<keyword id="KW-1145">T=7 icosahedral capsid protein</keyword>
<keyword id="KW-1161">Viral attachment to host cell</keyword>
<keyword id="KW-1162">Viral penetration into host cytoplasm</keyword>
<keyword id="KW-0946">Virion</keyword>
<keyword id="KW-1164">Virus endocytosis by host</keyword>
<keyword id="KW-1160">Virus entry into host cell</keyword>
<accession>P36736</accession>
<accession>Q81959</accession>
<gene>
    <name evidence="1" type="primary">L1</name>
</gene>
<organismHost>
    <name type="scientific">Homo sapiens</name>
    <name type="common">Human</name>
    <dbReference type="NCBI Taxonomy" id="9606"/>
</organismHost>
<reference key="1">
    <citation type="journal article" date="1994" name="Curr. Top. Microbiol. Immunol.">
        <title>Primer-directed sequencing of human papillomavirus types.</title>
        <authorList>
            <person name="Delius H."/>
            <person name="Hofmann B."/>
        </authorList>
    </citation>
    <scope>NUCLEOTIDE SEQUENCE [GENOMIC DNA]</scope>
</reference>
<name>VL1_HPV27</name>
<feature type="chain" id="PRO_0000133511" description="Major capsid protein L1">
    <location>
        <begin position="1"/>
        <end position="594"/>
    </location>
</feature>
<feature type="disulfide bond" description="Interchain (with C-533)" evidence="1">
    <location>
        <position position="282"/>
    </location>
</feature>
<feature type="disulfide bond" description="Interchain (with C-282)" evidence="1">
    <location>
        <position position="533"/>
    </location>
</feature>
<organism>
    <name type="scientific">Human papillomavirus 27</name>
    <dbReference type="NCBI Taxonomy" id="333752"/>
    <lineage>
        <taxon>Viruses</taxon>
        <taxon>Monodnaviria</taxon>
        <taxon>Shotokuvirae</taxon>
        <taxon>Cossaviricota</taxon>
        <taxon>Papovaviricetes</taxon>
        <taxon>Zurhausenvirales</taxon>
        <taxon>Papillomaviridae</taxon>
        <taxon>Firstpapillomavirinae</taxon>
        <taxon>Alphapapillomavirus</taxon>
        <taxon>Alphapapillomavirus 4</taxon>
    </lineage>
</organism>